<name>NU2C1_LACSA</name>
<organism>
    <name type="scientific">Lactuca sativa</name>
    <name type="common">Garden lettuce</name>
    <dbReference type="NCBI Taxonomy" id="4236"/>
    <lineage>
        <taxon>Eukaryota</taxon>
        <taxon>Viridiplantae</taxon>
        <taxon>Streptophyta</taxon>
        <taxon>Embryophyta</taxon>
        <taxon>Tracheophyta</taxon>
        <taxon>Spermatophyta</taxon>
        <taxon>Magnoliopsida</taxon>
        <taxon>eudicotyledons</taxon>
        <taxon>Gunneridae</taxon>
        <taxon>Pentapetalae</taxon>
        <taxon>asterids</taxon>
        <taxon>campanulids</taxon>
        <taxon>Asterales</taxon>
        <taxon>Asteraceae</taxon>
        <taxon>Cichorioideae</taxon>
        <taxon>Cichorieae</taxon>
        <taxon>Lactucinae</taxon>
        <taxon>Lactuca</taxon>
    </lineage>
</organism>
<sequence>MIWHVQNENFILDSTRIFMKAFHLLLFDGSLIFPECILIFGLILLLMIDSTSDQKDIPWLYFISSTSLVMSITSLLFRWREEPMISFSGNFQTNNFNEIFQFLILLCSTLCIPLSVEYIECTEMAITEFLLFVLTATIGGMFLCGANDLITIFVAPECFSLCSYLLSGYTKKDVRSNEATMKYLLMGGASSSILVHGFSWLYGSSGGEIELQEIVNGLINTQMYNSPGISIALIFITVGIGFKLSPAPSHQWTPDVYEGSPTPVVAFLSVTSKVAASASATRIFDIPFYFSSNEWHLLLEILAILSMILGNLIAITQTSMKRMLAYSSIGQIGYVIIGIIVGDSNDGYASMITYMLFYISMNLGTFACIVLFGLRTGTENIRDYAGLYTKDPFLALSLALCLLSLGGLPPLAGFFGKLYLFWCGWQAGLYFLVLIGLLTSVVSIYYYLKIIKLLMTGRNQEITPHVRNYRRSPLRSNNSIELSMIVCVIASTIPGISMNPIIAIAQDTLF</sequence>
<dbReference type="EC" id="7.1.1.-" evidence="1"/>
<dbReference type="EMBL" id="AP007232">
    <property type="protein sequence ID" value="BAE47654.1"/>
    <property type="molecule type" value="Genomic_DNA"/>
</dbReference>
<dbReference type="EMBL" id="DQ383816">
    <property type="protein sequence ID" value="ABD47295.1"/>
    <property type="molecule type" value="Genomic_DNA"/>
</dbReference>
<dbReference type="SMR" id="P0CC80"/>
<dbReference type="KEGG" id="lsv:3772851"/>
<dbReference type="KEGG" id="lsv:3772852"/>
<dbReference type="OrthoDB" id="1876953at2759"/>
<dbReference type="GO" id="GO:0009535">
    <property type="term" value="C:chloroplast thylakoid membrane"/>
    <property type="evidence" value="ECO:0007669"/>
    <property type="project" value="UniProtKB-SubCell"/>
</dbReference>
<dbReference type="GO" id="GO:0008137">
    <property type="term" value="F:NADH dehydrogenase (ubiquinone) activity"/>
    <property type="evidence" value="ECO:0007669"/>
    <property type="project" value="InterPro"/>
</dbReference>
<dbReference type="GO" id="GO:0048038">
    <property type="term" value="F:quinone binding"/>
    <property type="evidence" value="ECO:0007669"/>
    <property type="project" value="UniProtKB-KW"/>
</dbReference>
<dbReference type="GO" id="GO:0042773">
    <property type="term" value="P:ATP synthesis coupled electron transport"/>
    <property type="evidence" value="ECO:0007669"/>
    <property type="project" value="InterPro"/>
</dbReference>
<dbReference type="GO" id="GO:0019684">
    <property type="term" value="P:photosynthesis, light reaction"/>
    <property type="evidence" value="ECO:0007669"/>
    <property type="project" value="UniProtKB-UniRule"/>
</dbReference>
<dbReference type="HAMAP" id="MF_00445">
    <property type="entry name" value="NDH1_NuoN_1"/>
    <property type="match status" value="1"/>
</dbReference>
<dbReference type="InterPro" id="IPR010096">
    <property type="entry name" value="NADH-Q_OxRdtase_suN/2"/>
</dbReference>
<dbReference type="InterPro" id="IPR001750">
    <property type="entry name" value="ND/Mrp_TM"/>
</dbReference>
<dbReference type="InterPro" id="IPR045693">
    <property type="entry name" value="Ndh2_N"/>
</dbReference>
<dbReference type="NCBIfam" id="TIGR01770">
    <property type="entry name" value="NDH_I_N"/>
    <property type="match status" value="1"/>
</dbReference>
<dbReference type="NCBIfam" id="NF002701">
    <property type="entry name" value="PRK02504.1"/>
    <property type="match status" value="1"/>
</dbReference>
<dbReference type="PANTHER" id="PTHR22773">
    <property type="entry name" value="NADH DEHYDROGENASE"/>
    <property type="match status" value="1"/>
</dbReference>
<dbReference type="Pfam" id="PF19530">
    <property type="entry name" value="Ndh2_N"/>
    <property type="match status" value="1"/>
</dbReference>
<dbReference type="Pfam" id="PF00361">
    <property type="entry name" value="Proton_antipo_M"/>
    <property type="match status" value="1"/>
</dbReference>
<dbReference type="PRINTS" id="PR01434">
    <property type="entry name" value="NADHDHGNASE5"/>
</dbReference>
<feature type="chain" id="PRO_0000225345" description="NAD(P)H-quinone oxidoreductase subunit 2 A, chloroplastic">
    <location>
        <begin position="1"/>
        <end position="510"/>
    </location>
</feature>
<feature type="transmembrane region" description="Helical" evidence="1">
    <location>
        <begin position="24"/>
        <end position="44"/>
    </location>
</feature>
<feature type="transmembrane region" description="Helical" evidence="1">
    <location>
        <begin position="57"/>
        <end position="77"/>
    </location>
</feature>
<feature type="transmembrane region" description="Helical" evidence="1">
    <location>
        <begin position="99"/>
        <end position="119"/>
    </location>
</feature>
<feature type="transmembrane region" description="Helical" evidence="1">
    <location>
        <begin position="124"/>
        <end position="144"/>
    </location>
</feature>
<feature type="transmembrane region" description="Helical" evidence="1">
    <location>
        <begin position="149"/>
        <end position="169"/>
    </location>
</feature>
<feature type="transmembrane region" description="Helical" evidence="1">
    <location>
        <begin position="183"/>
        <end position="203"/>
    </location>
</feature>
<feature type="transmembrane region" description="Helical" evidence="1">
    <location>
        <begin position="227"/>
        <end position="247"/>
    </location>
</feature>
<feature type="transmembrane region" description="Helical" evidence="1">
    <location>
        <begin position="295"/>
        <end position="315"/>
    </location>
</feature>
<feature type="transmembrane region" description="Helical" evidence="1">
    <location>
        <begin position="323"/>
        <end position="343"/>
    </location>
</feature>
<feature type="transmembrane region" description="Helical" evidence="1">
    <location>
        <begin position="354"/>
        <end position="374"/>
    </location>
</feature>
<feature type="transmembrane region" description="Helical" evidence="1">
    <location>
        <begin position="395"/>
        <end position="415"/>
    </location>
</feature>
<feature type="transmembrane region" description="Helical" evidence="1">
    <location>
        <begin position="418"/>
        <end position="438"/>
    </location>
</feature>
<feature type="transmembrane region" description="Helical" evidence="1">
    <location>
        <begin position="484"/>
        <end position="504"/>
    </location>
</feature>
<evidence type="ECO:0000255" key="1">
    <source>
        <dbReference type="HAMAP-Rule" id="MF_00445"/>
    </source>
</evidence>
<accession>P0CC80</accession>
<accession>Q1KXG0</accession>
<accession>Q332R8</accession>
<geneLocation type="chloroplast"/>
<comment type="function">
    <text evidence="1">NDH shuttles electrons from NAD(P)H:plastoquinone, via FMN and iron-sulfur (Fe-S) centers, to quinones in the photosynthetic chain and possibly in a chloroplast respiratory chain. The immediate electron acceptor for the enzyme in this species is believed to be plastoquinone. Couples the redox reaction to proton translocation, and thus conserves the redox energy in a proton gradient.</text>
</comment>
<comment type="catalytic activity">
    <reaction evidence="1">
        <text>a plastoquinone + NADH + (n+1) H(+)(in) = a plastoquinol + NAD(+) + n H(+)(out)</text>
        <dbReference type="Rhea" id="RHEA:42608"/>
        <dbReference type="Rhea" id="RHEA-COMP:9561"/>
        <dbReference type="Rhea" id="RHEA-COMP:9562"/>
        <dbReference type="ChEBI" id="CHEBI:15378"/>
        <dbReference type="ChEBI" id="CHEBI:17757"/>
        <dbReference type="ChEBI" id="CHEBI:57540"/>
        <dbReference type="ChEBI" id="CHEBI:57945"/>
        <dbReference type="ChEBI" id="CHEBI:62192"/>
    </reaction>
</comment>
<comment type="catalytic activity">
    <reaction evidence="1">
        <text>a plastoquinone + NADPH + (n+1) H(+)(in) = a plastoquinol + NADP(+) + n H(+)(out)</text>
        <dbReference type="Rhea" id="RHEA:42612"/>
        <dbReference type="Rhea" id="RHEA-COMP:9561"/>
        <dbReference type="Rhea" id="RHEA-COMP:9562"/>
        <dbReference type="ChEBI" id="CHEBI:15378"/>
        <dbReference type="ChEBI" id="CHEBI:17757"/>
        <dbReference type="ChEBI" id="CHEBI:57783"/>
        <dbReference type="ChEBI" id="CHEBI:58349"/>
        <dbReference type="ChEBI" id="CHEBI:62192"/>
    </reaction>
</comment>
<comment type="subunit">
    <text evidence="1">NDH is composed of at least 16 different subunits, 5 of which are encoded in the nucleus.</text>
</comment>
<comment type="subcellular location">
    <subcellularLocation>
        <location evidence="1">Plastid</location>
        <location evidence="1">Chloroplast thylakoid membrane</location>
        <topology evidence="1">Multi-pass membrane protein</topology>
    </subcellularLocation>
</comment>
<comment type="similarity">
    <text evidence="1">Belongs to the complex I subunit 2 family.</text>
</comment>
<reference key="1">
    <citation type="journal article" date="2006" name="Transgenic Res.">
        <title>Efficient and stable transformation of Lactuca sativa L. cv. Cisco (lettuce) plastids.</title>
        <authorList>
            <person name="Kanamoto H."/>
            <person name="Yamashita A."/>
            <person name="Asao H."/>
            <person name="Okumura S."/>
            <person name="Takase H."/>
            <person name="Hattori M."/>
            <person name="Yokota A."/>
            <person name="Tomizawa K."/>
        </authorList>
    </citation>
    <scope>NUCLEOTIDE SEQUENCE [LARGE SCALE GENOMIC DNA]</scope>
    <source>
        <strain>cv. Cisco</strain>
    </source>
</reference>
<reference key="2">
    <citation type="submission" date="2006-01" db="EMBL/GenBank/DDBJ databases">
        <title>A comparison of the first two published chloroplast genomes in Asteraceae: Lactuca and Helianthus.</title>
        <authorList>
            <person name="Timme R.E."/>
            <person name="Kuehl J.V."/>
            <person name="Boore J.L."/>
            <person name="Jansen R.K."/>
        </authorList>
    </citation>
    <scope>NUCLEOTIDE SEQUENCE [LARGE SCALE GENOMIC DNA]</scope>
    <source>
        <strain>cv. Salinas</strain>
    </source>
</reference>
<proteinExistence type="inferred from homology"/>
<keyword id="KW-0150">Chloroplast</keyword>
<keyword id="KW-0472">Membrane</keyword>
<keyword id="KW-0520">NAD</keyword>
<keyword id="KW-0521">NADP</keyword>
<keyword id="KW-0934">Plastid</keyword>
<keyword id="KW-0618">Plastoquinone</keyword>
<keyword id="KW-0874">Quinone</keyword>
<keyword id="KW-0793">Thylakoid</keyword>
<keyword id="KW-1278">Translocase</keyword>
<keyword id="KW-0812">Transmembrane</keyword>
<keyword id="KW-1133">Transmembrane helix</keyword>
<keyword id="KW-0813">Transport</keyword>
<protein>
    <recommendedName>
        <fullName evidence="1">NAD(P)H-quinone oxidoreductase subunit 2 A, chloroplastic</fullName>
        <ecNumber evidence="1">7.1.1.-</ecNumber>
    </recommendedName>
    <alternativeName>
        <fullName evidence="1">NAD(P)H dehydrogenase, subunit 2 A</fullName>
    </alternativeName>
    <alternativeName>
        <fullName evidence="1">NADH-plastoquinone oxidoreductase subunit 2 A</fullName>
    </alternativeName>
</protein>
<gene>
    <name evidence="1" type="primary">ndhB1</name>
</gene>